<keyword id="KW-0175">Coiled coil</keyword>
<keyword id="KW-1185">Reference proteome</keyword>
<reference key="1">
    <citation type="submission" date="2007-11" db="EMBL/GenBank/DDBJ databases">
        <authorList>
            <consortium name="NIH - Xenopus Gene Collection (XGC) project"/>
        </authorList>
    </citation>
    <scope>NUCLEOTIDE SEQUENCE [LARGE SCALE MRNA]</scope>
    <source>
        <tissue>Embryo</tissue>
    </source>
</reference>
<proteinExistence type="evidence at transcript level"/>
<comment type="similarity">
    <text evidence="2">Belongs to the CCDC160 family.</text>
</comment>
<evidence type="ECO:0000255" key="1"/>
<evidence type="ECO:0000305" key="2"/>
<dbReference type="EMBL" id="BC155044">
    <property type="protein sequence ID" value="AAI55045.1"/>
    <property type="molecule type" value="mRNA"/>
</dbReference>
<dbReference type="RefSeq" id="NP_001106570.1">
    <property type="nucleotide sequence ID" value="NM_001113099.1"/>
</dbReference>
<dbReference type="SMR" id="A9JSR5"/>
<dbReference type="FunCoup" id="A9JSR5">
    <property type="interactions" value="1"/>
</dbReference>
<dbReference type="STRING" id="8364.ENSXETP00000049426"/>
<dbReference type="PaxDb" id="8364-ENSXETP00000062604"/>
<dbReference type="GeneID" id="100127779"/>
<dbReference type="KEGG" id="xtr:100127779"/>
<dbReference type="AGR" id="Xenbase:XB-GENE-5812115"/>
<dbReference type="CTD" id="347475"/>
<dbReference type="Xenbase" id="XB-GENE-5812115">
    <property type="gene designation" value="ccdc160"/>
</dbReference>
<dbReference type="eggNOG" id="ENOG502RVAM">
    <property type="taxonomic scope" value="Eukaryota"/>
</dbReference>
<dbReference type="InParanoid" id="A9JSR5"/>
<dbReference type="OrthoDB" id="5985715at2759"/>
<dbReference type="Proteomes" id="UP000008143">
    <property type="component" value="Chromosome 8"/>
</dbReference>
<dbReference type="PANTHER" id="PTHR48251">
    <property type="entry name" value="COILED-COIL DOMAIN-CONTAINING PROTEIN 160"/>
    <property type="match status" value="1"/>
</dbReference>
<dbReference type="PANTHER" id="PTHR48251:SF1">
    <property type="entry name" value="COILED-COIL DOMAIN-CONTAINING PROTEIN 160"/>
    <property type="match status" value="1"/>
</dbReference>
<name>CC160_XENTR</name>
<sequence length="312" mass="36482">MEDNKHWIEKLFPPHFTVQDFFSQSFEPEQLISEKISKEKVKNVEKMYHNAAERCLEAGKWKRKEELSNIFSYDPNIPDDQKEKEPPVGNLHDNVTCPIAAHVDDQCIWRENELKVLRHEMQQRYSEGAKFKNQLDACKLELSELKAKDKNTEQELGKAKEALTLSKTHIRNKGILVKQLQKDKLQKDSEIQSLKKDLHEKSVMINSLNKNLCIAGEEIQELKLKSKDLEQELITVKQQQGVKEGTLIENLKRNYILEKNKLLREIENLKEEERKREKTHSLNLAALDLLRKHFSSQSINTSTEVIQLKIVH</sequence>
<organism>
    <name type="scientific">Xenopus tropicalis</name>
    <name type="common">Western clawed frog</name>
    <name type="synonym">Silurana tropicalis</name>
    <dbReference type="NCBI Taxonomy" id="8364"/>
    <lineage>
        <taxon>Eukaryota</taxon>
        <taxon>Metazoa</taxon>
        <taxon>Chordata</taxon>
        <taxon>Craniata</taxon>
        <taxon>Vertebrata</taxon>
        <taxon>Euteleostomi</taxon>
        <taxon>Amphibia</taxon>
        <taxon>Batrachia</taxon>
        <taxon>Anura</taxon>
        <taxon>Pipoidea</taxon>
        <taxon>Pipidae</taxon>
        <taxon>Xenopodinae</taxon>
        <taxon>Xenopus</taxon>
        <taxon>Silurana</taxon>
    </lineage>
</organism>
<feature type="chain" id="PRO_0000345953" description="Coiled-coil domain-containing protein 160 homolog">
    <location>
        <begin position="1"/>
        <end position="312"/>
    </location>
</feature>
<feature type="coiled-coil region" evidence="1">
    <location>
        <begin position="126"/>
        <end position="281"/>
    </location>
</feature>
<accession>A9JSR5</accession>
<protein>
    <recommendedName>
        <fullName>Coiled-coil domain-containing protein 160 homolog</fullName>
    </recommendedName>
</protein>